<feature type="chain" id="PRO_1000124697" description="3-phosphoshikimate 1-carboxyvinyltransferase">
    <location>
        <begin position="1"/>
        <end position="418"/>
    </location>
</feature>
<feature type="active site" description="Proton acceptor" evidence="1">
    <location>
        <position position="297"/>
    </location>
</feature>
<feature type="binding site" evidence="1">
    <location>
        <position position="26"/>
    </location>
    <ligand>
        <name>3-phosphoshikimate</name>
        <dbReference type="ChEBI" id="CHEBI:145989"/>
    </ligand>
</feature>
<feature type="binding site" evidence="1">
    <location>
        <position position="26"/>
    </location>
    <ligand>
        <name>phosphoenolpyruvate</name>
        <dbReference type="ChEBI" id="CHEBI:58702"/>
    </ligand>
</feature>
<feature type="binding site" evidence="1">
    <location>
        <position position="27"/>
    </location>
    <ligand>
        <name>3-phosphoshikimate</name>
        <dbReference type="ChEBI" id="CHEBI:145989"/>
    </ligand>
</feature>
<feature type="binding site" evidence="1">
    <location>
        <position position="31"/>
    </location>
    <ligand>
        <name>3-phosphoshikimate</name>
        <dbReference type="ChEBI" id="CHEBI:145989"/>
    </ligand>
</feature>
<feature type="binding site" evidence="1">
    <location>
        <position position="97"/>
    </location>
    <ligand>
        <name>phosphoenolpyruvate</name>
        <dbReference type="ChEBI" id="CHEBI:58702"/>
    </ligand>
</feature>
<feature type="binding site" evidence="1">
    <location>
        <position position="125"/>
    </location>
    <ligand>
        <name>phosphoenolpyruvate</name>
        <dbReference type="ChEBI" id="CHEBI:58702"/>
    </ligand>
</feature>
<feature type="binding site" evidence="1">
    <location>
        <position position="170"/>
    </location>
    <ligand>
        <name>3-phosphoshikimate</name>
        <dbReference type="ChEBI" id="CHEBI:145989"/>
    </ligand>
</feature>
<feature type="binding site" evidence="1">
    <location>
        <position position="171"/>
    </location>
    <ligand>
        <name>3-phosphoshikimate</name>
        <dbReference type="ChEBI" id="CHEBI:145989"/>
    </ligand>
</feature>
<feature type="binding site" evidence="1">
    <location>
        <position position="172"/>
    </location>
    <ligand>
        <name>3-phosphoshikimate</name>
        <dbReference type="ChEBI" id="CHEBI:145989"/>
    </ligand>
</feature>
<feature type="binding site" evidence="1">
    <location>
        <position position="172"/>
    </location>
    <ligand>
        <name>phosphoenolpyruvate</name>
        <dbReference type="ChEBI" id="CHEBI:58702"/>
    </ligand>
</feature>
<feature type="binding site" evidence="1">
    <location>
        <position position="297"/>
    </location>
    <ligand>
        <name>3-phosphoshikimate</name>
        <dbReference type="ChEBI" id="CHEBI:145989"/>
    </ligand>
</feature>
<feature type="binding site" evidence="1">
    <location>
        <position position="320"/>
    </location>
    <ligand>
        <name>3-phosphoshikimate</name>
        <dbReference type="ChEBI" id="CHEBI:145989"/>
    </ligand>
</feature>
<feature type="binding site" evidence="1">
    <location>
        <position position="324"/>
    </location>
    <ligand>
        <name>3-phosphoshikimate</name>
        <dbReference type="ChEBI" id="CHEBI:145989"/>
    </ligand>
</feature>
<feature type="binding site" evidence="1">
    <location>
        <position position="328"/>
    </location>
    <ligand>
        <name>phosphoenolpyruvate</name>
        <dbReference type="ChEBI" id="CHEBI:58702"/>
    </ligand>
</feature>
<feature type="binding site" evidence="1">
    <location>
        <position position="375"/>
    </location>
    <ligand>
        <name>phosphoenolpyruvate</name>
        <dbReference type="ChEBI" id="CHEBI:58702"/>
    </ligand>
</feature>
<feature type="binding site" evidence="1">
    <location>
        <position position="400"/>
    </location>
    <ligand>
        <name>phosphoenolpyruvate</name>
        <dbReference type="ChEBI" id="CHEBI:58702"/>
    </ligand>
</feature>
<protein>
    <recommendedName>
        <fullName evidence="1">3-phosphoshikimate 1-carboxyvinyltransferase</fullName>
        <ecNumber evidence="1">2.5.1.19</ecNumber>
    </recommendedName>
    <alternativeName>
        <fullName evidence="1">5-enolpyruvylshikimate-3-phosphate synthase</fullName>
        <shortName evidence="1">EPSP synthase</shortName>
        <shortName evidence="1">EPSPS</shortName>
    </alternativeName>
</protein>
<comment type="function">
    <text evidence="1">Catalyzes the transfer of the enolpyruvyl moiety of phosphoenolpyruvate (PEP) to the 5-hydroxyl of shikimate-3-phosphate (S3P) to produce enolpyruvyl shikimate-3-phosphate and inorganic phosphate.</text>
</comment>
<comment type="catalytic activity">
    <reaction evidence="1">
        <text>3-phosphoshikimate + phosphoenolpyruvate = 5-O-(1-carboxyvinyl)-3-phosphoshikimate + phosphate</text>
        <dbReference type="Rhea" id="RHEA:21256"/>
        <dbReference type="ChEBI" id="CHEBI:43474"/>
        <dbReference type="ChEBI" id="CHEBI:57701"/>
        <dbReference type="ChEBI" id="CHEBI:58702"/>
        <dbReference type="ChEBI" id="CHEBI:145989"/>
        <dbReference type="EC" id="2.5.1.19"/>
    </reaction>
    <physiologicalReaction direction="left-to-right" evidence="1">
        <dbReference type="Rhea" id="RHEA:21257"/>
    </physiologicalReaction>
</comment>
<comment type="pathway">
    <text evidence="1">Metabolic intermediate biosynthesis; chorismate biosynthesis; chorismate from D-erythrose 4-phosphate and phosphoenolpyruvate: step 6/7.</text>
</comment>
<comment type="subunit">
    <text evidence="1">Monomer.</text>
</comment>
<comment type="subcellular location">
    <subcellularLocation>
        <location evidence="1">Cytoplasm</location>
    </subcellularLocation>
</comment>
<comment type="similarity">
    <text evidence="1">Belongs to the EPSP synthase family.</text>
</comment>
<gene>
    <name evidence="1" type="primary">aroA</name>
    <name type="ordered locus">PSPTO_1041</name>
    <name type="ORF">PSPTO1041</name>
</gene>
<keyword id="KW-0028">Amino-acid biosynthesis</keyword>
<keyword id="KW-0057">Aromatic amino acid biosynthesis</keyword>
<keyword id="KW-0963">Cytoplasm</keyword>
<keyword id="KW-1185">Reference proteome</keyword>
<keyword id="KW-0808">Transferase</keyword>
<evidence type="ECO:0000255" key="1">
    <source>
        <dbReference type="HAMAP-Rule" id="MF_00210"/>
    </source>
</evidence>
<sequence>MRPQATLTVMPVERPLVGRVSPPGSKSITNRALLLAGLAKGTSRLTGALKSDDTRVMSEALRLMGVQVDEPDDSTFVVTSSGHWQAPQQALFLGNAGTATRFLTAALANFEGDFVVDGDEYMRKRPIGPLVDALQRMGVEISAPSGCPPVAIKGKGGLQAGRIEIDGNLSSQYVSALLMAGACGKGSLEVALTGSEIGARGYVDLTLAAMQAFGAEVQAIGDAAWKVSATGYHATDFHIEPDASAATYLWAAQALTEGNIDLGVASDAFTQPDALASQIIDSFPNMPAVIDGSQMQDAIPTLAVLAAFNRQPVRFVGIANLRVKECDRISALCDGLCAIAPGLAVEEGDDLIVHANPALAGTTVNALIDTHSDHRIAMCFALAGLKIKGIHIQDPDCVAKTYPGYWDALASLGVSVQR</sequence>
<organism>
    <name type="scientific">Pseudomonas syringae pv. tomato (strain ATCC BAA-871 / DC3000)</name>
    <dbReference type="NCBI Taxonomy" id="223283"/>
    <lineage>
        <taxon>Bacteria</taxon>
        <taxon>Pseudomonadati</taxon>
        <taxon>Pseudomonadota</taxon>
        <taxon>Gammaproteobacteria</taxon>
        <taxon>Pseudomonadales</taxon>
        <taxon>Pseudomonadaceae</taxon>
        <taxon>Pseudomonas</taxon>
    </lineage>
</organism>
<name>AROA_PSESM</name>
<dbReference type="EC" id="2.5.1.19" evidence="1"/>
<dbReference type="EMBL" id="AE016853">
    <property type="protein sequence ID" value="AAO54572.1"/>
    <property type="molecule type" value="Genomic_DNA"/>
</dbReference>
<dbReference type="RefSeq" id="NP_790877.1">
    <property type="nucleotide sequence ID" value="NC_004578.1"/>
</dbReference>
<dbReference type="RefSeq" id="WP_011103393.1">
    <property type="nucleotide sequence ID" value="NC_004578.1"/>
</dbReference>
<dbReference type="SMR" id="Q888I3"/>
<dbReference type="STRING" id="223283.PSPTO_1041"/>
<dbReference type="GeneID" id="1182675"/>
<dbReference type="KEGG" id="pst:PSPTO_1041"/>
<dbReference type="PATRIC" id="fig|223283.9.peg.1052"/>
<dbReference type="eggNOG" id="COG0128">
    <property type="taxonomic scope" value="Bacteria"/>
</dbReference>
<dbReference type="HOGENOM" id="CLU_024321_0_0_6"/>
<dbReference type="OrthoDB" id="9809920at2"/>
<dbReference type="PhylomeDB" id="Q888I3"/>
<dbReference type="UniPathway" id="UPA00053">
    <property type="reaction ID" value="UER00089"/>
</dbReference>
<dbReference type="Proteomes" id="UP000002515">
    <property type="component" value="Chromosome"/>
</dbReference>
<dbReference type="GO" id="GO:0005737">
    <property type="term" value="C:cytoplasm"/>
    <property type="evidence" value="ECO:0007669"/>
    <property type="project" value="UniProtKB-SubCell"/>
</dbReference>
<dbReference type="GO" id="GO:0003866">
    <property type="term" value="F:3-phosphoshikimate 1-carboxyvinyltransferase activity"/>
    <property type="evidence" value="ECO:0007669"/>
    <property type="project" value="UniProtKB-UniRule"/>
</dbReference>
<dbReference type="GO" id="GO:0008652">
    <property type="term" value="P:amino acid biosynthetic process"/>
    <property type="evidence" value="ECO:0007669"/>
    <property type="project" value="UniProtKB-KW"/>
</dbReference>
<dbReference type="GO" id="GO:0009073">
    <property type="term" value="P:aromatic amino acid family biosynthetic process"/>
    <property type="evidence" value="ECO:0007669"/>
    <property type="project" value="UniProtKB-KW"/>
</dbReference>
<dbReference type="GO" id="GO:0009423">
    <property type="term" value="P:chorismate biosynthetic process"/>
    <property type="evidence" value="ECO:0007669"/>
    <property type="project" value="UniProtKB-UniRule"/>
</dbReference>
<dbReference type="CDD" id="cd01556">
    <property type="entry name" value="EPSP_synthase"/>
    <property type="match status" value="1"/>
</dbReference>
<dbReference type="Gene3D" id="3.65.10.10">
    <property type="entry name" value="Enolpyruvate transferase domain"/>
    <property type="match status" value="3"/>
</dbReference>
<dbReference type="HAMAP" id="MF_00210">
    <property type="entry name" value="EPSP_synth"/>
    <property type="match status" value="1"/>
</dbReference>
<dbReference type="InterPro" id="IPR001986">
    <property type="entry name" value="Enolpyruvate_Tfrase_dom"/>
</dbReference>
<dbReference type="InterPro" id="IPR036968">
    <property type="entry name" value="Enolpyruvate_Tfrase_sf"/>
</dbReference>
<dbReference type="InterPro" id="IPR006264">
    <property type="entry name" value="EPSP_synthase"/>
</dbReference>
<dbReference type="InterPro" id="IPR023193">
    <property type="entry name" value="EPSP_synthase_CS"/>
</dbReference>
<dbReference type="InterPro" id="IPR013792">
    <property type="entry name" value="RNA3'P_cycl/enolpyr_Trfase_a/b"/>
</dbReference>
<dbReference type="PANTHER" id="PTHR21090">
    <property type="entry name" value="AROM/DEHYDROQUINATE SYNTHASE"/>
    <property type="match status" value="1"/>
</dbReference>
<dbReference type="PANTHER" id="PTHR21090:SF5">
    <property type="entry name" value="PENTAFUNCTIONAL AROM POLYPEPTIDE"/>
    <property type="match status" value="1"/>
</dbReference>
<dbReference type="Pfam" id="PF00275">
    <property type="entry name" value="EPSP_synthase"/>
    <property type="match status" value="1"/>
</dbReference>
<dbReference type="PIRSF" id="PIRSF000505">
    <property type="entry name" value="EPSPS"/>
    <property type="match status" value="1"/>
</dbReference>
<dbReference type="SUPFAM" id="SSF55205">
    <property type="entry name" value="EPT/RTPC-like"/>
    <property type="match status" value="1"/>
</dbReference>
<dbReference type="PROSITE" id="PS00104">
    <property type="entry name" value="EPSP_SYNTHASE_1"/>
    <property type="match status" value="1"/>
</dbReference>
<accession>Q888I3</accession>
<proteinExistence type="inferred from homology"/>
<reference key="1">
    <citation type="journal article" date="2003" name="Proc. Natl. Acad. Sci. U.S.A.">
        <title>The complete genome sequence of the Arabidopsis and tomato pathogen Pseudomonas syringae pv. tomato DC3000.</title>
        <authorList>
            <person name="Buell C.R."/>
            <person name="Joardar V."/>
            <person name="Lindeberg M."/>
            <person name="Selengut J."/>
            <person name="Paulsen I.T."/>
            <person name="Gwinn M.L."/>
            <person name="Dodson R.J."/>
            <person name="DeBoy R.T."/>
            <person name="Durkin A.S."/>
            <person name="Kolonay J.F."/>
            <person name="Madupu R."/>
            <person name="Daugherty S.C."/>
            <person name="Brinkac L.M."/>
            <person name="Beanan M.J."/>
            <person name="Haft D.H."/>
            <person name="Nelson W.C."/>
            <person name="Davidsen T.M."/>
            <person name="Zafar N."/>
            <person name="Zhou L."/>
            <person name="Liu J."/>
            <person name="Yuan Q."/>
            <person name="Khouri H.M."/>
            <person name="Fedorova N.B."/>
            <person name="Tran B."/>
            <person name="Russell D."/>
            <person name="Berry K.J."/>
            <person name="Utterback T.R."/>
            <person name="Van Aken S.E."/>
            <person name="Feldblyum T.V."/>
            <person name="D'Ascenzo M."/>
            <person name="Deng W.-L."/>
            <person name="Ramos A.R."/>
            <person name="Alfano J.R."/>
            <person name="Cartinhour S."/>
            <person name="Chatterjee A.K."/>
            <person name="Delaney T.P."/>
            <person name="Lazarowitz S.G."/>
            <person name="Martin G.B."/>
            <person name="Schneider D.J."/>
            <person name="Tang X."/>
            <person name="Bender C.L."/>
            <person name="White O."/>
            <person name="Fraser C.M."/>
            <person name="Collmer A."/>
        </authorList>
    </citation>
    <scope>NUCLEOTIDE SEQUENCE [LARGE SCALE GENOMIC DNA]</scope>
    <source>
        <strain>ATCC BAA-871 / DC3000</strain>
    </source>
</reference>